<organism>
    <name type="scientific">Aeromonas hydrophila subsp. hydrophila (strain ATCC 7966 / DSM 30187 / BCRC 13018 / CCUG 14551 / JCM 1027 / KCTC 2358 / NCIMB 9240 / NCTC 8049)</name>
    <dbReference type="NCBI Taxonomy" id="380703"/>
    <lineage>
        <taxon>Bacteria</taxon>
        <taxon>Pseudomonadati</taxon>
        <taxon>Pseudomonadota</taxon>
        <taxon>Gammaproteobacteria</taxon>
        <taxon>Aeromonadales</taxon>
        <taxon>Aeromonadaceae</taxon>
        <taxon>Aeromonas</taxon>
    </lineage>
</organism>
<keyword id="KW-0001">2Fe-2S</keyword>
<keyword id="KW-0963">Cytoplasm</keyword>
<keyword id="KW-0408">Iron</keyword>
<keyword id="KW-0411">Iron-sulfur</keyword>
<keyword id="KW-0479">Metal-binding</keyword>
<keyword id="KW-0560">Oxidoreductase</keyword>
<keyword id="KW-1185">Reference proteome</keyword>
<evidence type="ECO:0000255" key="1">
    <source>
        <dbReference type="HAMAP-Rule" id="MF_00069"/>
    </source>
</evidence>
<reference key="1">
    <citation type="journal article" date="2006" name="J. Bacteriol.">
        <title>Genome sequence of Aeromonas hydrophila ATCC 7966T: jack of all trades.</title>
        <authorList>
            <person name="Seshadri R."/>
            <person name="Joseph S.W."/>
            <person name="Chopra A.K."/>
            <person name="Sha J."/>
            <person name="Shaw J."/>
            <person name="Graf J."/>
            <person name="Haft D.H."/>
            <person name="Wu M."/>
            <person name="Ren Q."/>
            <person name="Rosovitz M.J."/>
            <person name="Madupu R."/>
            <person name="Tallon L."/>
            <person name="Kim M."/>
            <person name="Jin S."/>
            <person name="Vuong H."/>
            <person name="Stine O.C."/>
            <person name="Ali A."/>
            <person name="Horneman A.J."/>
            <person name="Heidelberg J.F."/>
        </authorList>
    </citation>
    <scope>NUCLEOTIDE SEQUENCE [LARGE SCALE GENOMIC DNA]</scope>
    <source>
        <strain>ATCC 7966 / DSM 30187 / BCRC 13018 / CCUG 14551 / JCM 1027 / KCTC 2358 / NCIMB 9240 / NCTC 8049</strain>
    </source>
</reference>
<proteinExistence type="inferred from homology"/>
<protein>
    <recommendedName>
        <fullName evidence="1">Hydroxylamine reductase</fullName>
        <ecNumber evidence="1">1.7.99.1</ecNumber>
    </recommendedName>
    <alternativeName>
        <fullName evidence="1">Hybrid-cluster protein</fullName>
        <shortName evidence="1">HCP</shortName>
    </alternativeName>
    <alternativeName>
        <fullName evidence="1">Prismane protein</fullName>
    </alternativeName>
</protein>
<name>HCP_AERHH</name>
<comment type="function">
    <text evidence="1">Catalyzes the reduction of hydroxylamine to form NH(3) and H(2)O.</text>
</comment>
<comment type="catalytic activity">
    <reaction evidence="1">
        <text>A + NH4(+) + H2O = hydroxylamine + AH2 + H(+)</text>
        <dbReference type="Rhea" id="RHEA:22052"/>
        <dbReference type="ChEBI" id="CHEBI:13193"/>
        <dbReference type="ChEBI" id="CHEBI:15377"/>
        <dbReference type="ChEBI" id="CHEBI:15378"/>
        <dbReference type="ChEBI" id="CHEBI:15429"/>
        <dbReference type="ChEBI" id="CHEBI:17499"/>
        <dbReference type="ChEBI" id="CHEBI:28938"/>
        <dbReference type="EC" id="1.7.99.1"/>
    </reaction>
</comment>
<comment type="cofactor">
    <cofactor evidence="1">
        <name>[2Fe-2S] cluster</name>
        <dbReference type="ChEBI" id="CHEBI:190135"/>
    </cofactor>
    <text evidence="1">Binds 1 [2Fe-2S] cluster.</text>
</comment>
<comment type="cofactor">
    <cofactor evidence="1">
        <name>hybrid [4Fe-2O-2S] cluster</name>
        <dbReference type="ChEBI" id="CHEBI:60519"/>
    </cofactor>
    <text evidence="1">Binds 1 hybrid [4Fe-2O-2S] cluster.</text>
</comment>
<comment type="subcellular location">
    <subcellularLocation>
        <location evidence="1">Cytoplasm</location>
    </subcellularLocation>
</comment>
<comment type="similarity">
    <text evidence="1">Belongs to the HCP family.</text>
</comment>
<feature type="chain" id="PRO_1000009140" description="Hydroxylamine reductase">
    <location>
        <begin position="1"/>
        <end position="549"/>
    </location>
</feature>
<feature type="binding site" evidence="1">
    <location>
        <position position="3"/>
    </location>
    <ligand>
        <name>[2Fe-2S] cluster</name>
        <dbReference type="ChEBI" id="CHEBI:190135"/>
    </ligand>
</feature>
<feature type="binding site" evidence="1">
    <location>
        <position position="6"/>
    </location>
    <ligand>
        <name>[2Fe-2S] cluster</name>
        <dbReference type="ChEBI" id="CHEBI:190135"/>
    </ligand>
</feature>
<feature type="binding site" evidence="1">
    <location>
        <position position="18"/>
    </location>
    <ligand>
        <name>[2Fe-2S] cluster</name>
        <dbReference type="ChEBI" id="CHEBI:190135"/>
    </ligand>
</feature>
<feature type="binding site" evidence="1">
    <location>
        <position position="25"/>
    </location>
    <ligand>
        <name>[2Fe-2S] cluster</name>
        <dbReference type="ChEBI" id="CHEBI:190135"/>
    </ligand>
</feature>
<feature type="binding site" evidence="1">
    <location>
        <position position="248"/>
    </location>
    <ligand>
        <name>hybrid [4Fe-2O-2S] cluster</name>
        <dbReference type="ChEBI" id="CHEBI:60519"/>
    </ligand>
</feature>
<feature type="binding site" evidence="1">
    <location>
        <position position="272"/>
    </location>
    <ligand>
        <name>hybrid [4Fe-2O-2S] cluster</name>
        <dbReference type="ChEBI" id="CHEBI:60519"/>
    </ligand>
</feature>
<feature type="binding site" evidence="1">
    <location>
        <position position="316"/>
    </location>
    <ligand>
        <name>hybrid [4Fe-2O-2S] cluster</name>
        <dbReference type="ChEBI" id="CHEBI:60519"/>
    </ligand>
</feature>
<feature type="binding site" description="via persulfide group" evidence="1">
    <location>
        <position position="404"/>
    </location>
    <ligand>
        <name>hybrid [4Fe-2O-2S] cluster</name>
        <dbReference type="ChEBI" id="CHEBI:60519"/>
    </ligand>
</feature>
<feature type="binding site" evidence="1">
    <location>
        <position position="432"/>
    </location>
    <ligand>
        <name>hybrid [4Fe-2O-2S] cluster</name>
        <dbReference type="ChEBI" id="CHEBI:60519"/>
    </ligand>
</feature>
<feature type="binding site" evidence="1">
    <location>
        <position position="457"/>
    </location>
    <ligand>
        <name>hybrid [4Fe-2O-2S] cluster</name>
        <dbReference type="ChEBI" id="CHEBI:60519"/>
    </ligand>
</feature>
<feature type="binding site" evidence="1">
    <location>
        <position position="491"/>
    </location>
    <ligand>
        <name>hybrid [4Fe-2O-2S] cluster</name>
        <dbReference type="ChEBI" id="CHEBI:60519"/>
    </ligand>
</feature>
<feature type="binding site" evidence="1">
    <location>
        <position position="493"/>
    </location>
    <ligand>
        <name>hybrid [4Fe-2O-2S] cluster</name>
        <dbReference type="ChEBI" id="CHEBI:60519"/>
    </ligand>
</feature>
<feature type="modified residue" description="Cysteine persulfide" evidence="1">
    <location>
        <position position="404"/>
    </location>
</feature>
<dbReference type="EC" id="1.7.99.1" evidence="1"/>
<dbReference type="EMBL" id="CP000462">
    <property type="protein sequence ID" value="ABK36664.1"/>
    <property type="molecule type" value="Genomic_DNA"/>
</dbReference>
<dbReference type="RefSeq" id="WP_011705038.1">
    <property type="nucleotide sequence ID" value="NC_008570.1"/>
</dbReference>
<dbReference type="RefSeq" id="YP_855653.1">
    <property type="nucleotide sequence ID" value="NC_008570.1"/>
</dbReference>
<dbReference type="SMR" id="A0KHA2"/>
<dbReference type="STRING" id="380703.AHA_1111"/>
<dbReference type="EnsemblBacteria" id="ABK36664">
    <property type="protein sequence ID" value="ABK36664"/>
    <property type="gene ID" value="AHA_1111"/>
</dbReference>
<dbReference type="GeneID" id="4490065"/>
<dbReference type="KEGG" id="aha:AHA_1111"/>
<dbReference type="PATRIC" id="fig|380703.7.peg.1116"/>
<dbReference type="eggNOG" id="COG1151">
    <property type="taxonomic scope" value="Bacteria"/>
</dbReference>
<dbReference type="HOGENOM" id="CLU_038344_2_0_6"/>
<dbReference type="OrthoDB" id="9761526at2"/>
<dbReference type="Proteomes" id="UP000000756">
    <property type="component" value="Chromosome"/>
</dbReference>
<dbReference type="GO" id="GO:0005737">
    <property type="term" value="C:cytoplasm"/>
    <property type="evidence" value="ECO:0007669"/>
    <property type="project" value="UniProtKB-SubCell"/>
</dbReference>
<dbReference type="GO" id="GO:0051537">
    <property type="term" value="F:2 iron, 2 sulfur cluster binding"/>
    <property type="evidence" value="ECO:0007669"/>
    <property type="project" value="UniProtKB-KW"/>
</dbReference>
<dbReference type="GO" id="GO:0050418">
    <property type="term" value="F:hydroxylamine reductase activity"/>
    <property type="evidence" value="ECO:0007669"/>
    <property type="project" value="UniProtKB-UniRule"/>
</dbReference>
<dbReference type="GO" id="GO:0046872">
    <property type="term" value="F:metal ion binding"/>
    <property type="evidence" value="ECO:0007669"/>
    <property type="project" value="UniProtKB-KW"/>
</dbReference>
<dbReference type="GO" id="GO:0004601">
    <property type="term" value="F:peroxidase activity"/>
    <property type="evidence" value="ECO:0007669"/>
    <property type="project" value="TreeGrafter"/>
</dbReference>
<dbReference type="GO" id="GO:0042542">
    <property type="term" value="P:response to hydrogen peroxide"/>
    <property type="evidence" value="ECO:0007669"/>
    <property type="project" value="TreeGrafter"/>
</dbReference>
<dbReference type="CDD" id="cd01914">
    <property type="entry name" value="HCP"/>
    <property type="match status" value="1"/>
</dbReference>
<dbReference type="FunFam" id="1.20.1270.20:FF:000001">
    <property type="entry name" value="Hydroxylamine reductase"/>
    <property type="match status" value="1"/>
</dbReference>
<dbReference type="FunFam" id="1.20.1270.20:FF:000002">
    <property type="entry name" value="Hydroxylamine reductase"/>
    <property type="match status" value="1"/>
</dbReference>
<dbReference type="FunFam" id="3.40.50.2030:FF:000001">
    <property type="entry name" value="Hydroxylamine reductase"/>
    <property type="match status" value="1"/>
</dbReference>
<dbReference type="FunFam" id="3.40.50.2030:FF:000002">
    <property type="entry name" value="Hydroxylamine reductase"/>
    <property type="match status" value="1"/>
</dbReference>
<dbReference type="Gene3D" id="1.20.1270.20">
    <property type="match status" value="2"/>
</dbReference>
<dbReference type="Gene3D" id="3.40.50.2030">
    <property type="match status" value="2"/>
</dbReference>
<dbReference type="HAMAP" id="MF_00069">
    <property type="entry name" value="Hydroxylam_reduct"/>
    <property type="match status" value="1"/>
</dbReference>
<dbReference type="InterPro" id="IPR004137">
    <property type="entry name" value="HCP/CODH"/>
</dbReference>
<dbReference type="InterPro" id="IPR010048">
    <property type="entry name" value="Hydroxylam_reduct"/>
</dbReference>
<dbReference type="InterPro" id="IPR016099">
    <property type="entry name" value="Prismane-like_a/b-sand"/>
</dbReference>
<dbReference type="InterPro" id="IPR011254">
    <property type="entry name" value="Prismane-like_sf"/>
</dbReference>
<dbReference type="InterPro" id="IPR016100">
    <property type="entry name" value="Prismane_a-bundle"/>
</dbReference>
<dbReference type="NCBIfam" id="TIGR01703">
    <property type="entry name" value="hybrid_clust"/>
    <property type="match status" value="1"/>
</dbReference>
<dbReference type="NCBIfam" id="NF003658">
    <property type="entry name" value="PRK05290.1"/>
    <property type="match status" value="1"/>
</dbReference>
<dbReference type="PANTHER" id="PTHR30109">
    <property type="entry name" value="HYDROXYLAMINE REDUCTASE"/>
    <property type="match status" value="1"/>
</dbReference>
<dbReference type="PANTHER" id="PTHR30109:SF0">
    <property type="entry name" value="HYDROXYLAMINE REDUCTASE"/>
    <property type="match status" value="1"/>
</dbReference>
<dbReference type="Pfam" id="PF03063">
    <property type="entry name" value="Prismane"/>
    <property type="match status" value="1"/>
</dbReference>
<dbReference type="PIRSF" id="PIRSF000076">
    <property type="entry name" value="HCP"/>
    <property type="match status" value="1"/>
</dbReference>
<dbReference type="SUPFAM" id="SSF56821">
    <property type="entry name" value="Prismane protein-like"/>
    <property type="match status" value="1"/>
</dbReference>
<accession>A0KHA2</accession>
<gene>
    <name evidence="1" type="primary">hcp</name>
    <name type="ordered locus">AHA_1111</name>
</gene>
<sequence>MFCVQCEQTIRTPAGNGCAYAQGMCGKTAETSDLQDVLIYTLQGLSAWALAAREHGIVDSEIDAFVPKAFFATLTNVNFDSARIVAYVNQALTYRQQLAAKLAPLAVQADTLPAAARFEPGADLLAQLAQAPQTAVNRGKNEVNEDIMGLRLLCLYGLKGAAAYMEHARVLDQQDAGVAAEFHRIMSWLGTDPSDLDPLFKCAMDIGLLNFKIMEMLDLGETTAFGHPEPTQVRVTPVPGKCILVSGHDMVDLKLILEQTKGTGINIYTHGEMLPALAYPFFKQYPHLVGNYGSAWQNQQKEFANFPGAVVMTSNCIIDPNVGNYSDRIFTRSIVGWPGVTHLEGEDFSAVIAKAQALEGFKHVELEHFITIGFARNALMQAAPAVIDKVKAGEISHFFLVGGCDGDRAERAYYTEFAKAIPQDSLLLTLGCGKYKFNKLDFGDIGGIPRLLDVGQCNDAYSAIQLALALSEAFECGVNDLPLTLVLSWFEQKAIVILLTLLALGVKDIRTGPTAPAFLTPALLKVLEEQFGLKGTTTAEADLAEILAA</sequence>